<dbReference type="EMBL" id="AF160811">
    <property type="protein sequence ID" value="AAD45715.1"/>
    <property type="molecule type" value="Genomic_DNA"/>
</dbReference>
<dbReference type="SMR" id="Q9S470"/>
<dbReference type="GO" id="GO:0005737">
    <property type="term" value="C:cytoplasm"/>
    <property type="evidence" value="ECO:0007669"/>
    <property type="project" value="UniProtKB-SubCell"/>
</dbReference>
<dbReference type="GO" id="GO:0003700">
    <property type="term" value="F:DNA-binding transcription factor activity"/>
    <property type="evidence" value="ECO:0007669"/>
    <property type="project" value="InterPro"/>
</dbReference>
<dbReference type="GO" id="GO:0000976">
    <property type="term" value="F:transcription cis-regulatory region binding"/>
    <property type="evidence" value="ECO:0007669"/>
    <property type="project" value="TreeGrafter"/>
</dbReference>
<dbReference type="CDD" id="cd01541">
    <property type="entry name" value="PBP1_AraR"/>
    <property type="match status" value="1"/>
</dbReference>
<dbReference type="CDD" id="cd07377">
    <property type="entry name" value="WHTH_GntR"/>
    <property type="match status" value="1"/>
</dbReference>
<dbReference type="FunFam" id="1.10.10.10:FF:000079">
    <property type="entry name" value="GntR family transcriptional regulator"/>
    <property type="match status" value="1"/>
</dbReference>
<dbReference type="Gene3D" id="3.40.50.2300">
    <property type="match status" value="2"/>
</dbReference>
<dbReference type="Gene3D" id="1.10.10.10">
    <property type="entry name" value="Winged helix-like DNA-binding domain superfamily/Winged helix DNA-binding domain"/>
    <property type="match status" value="1"/>
</dbReference>
<dbReference type="InterPro" id="IPR033532">
    <property type="entry name" value="AraR_ligand_bind_dom"/>
</dbReference>
<dbReference type="InterPro" id="IPR046335">
    <property type="entry name" value="LacI/GalR-like_sensor"/>
</dbReference>
<dbReference type="InterPro" id="IPR028082">
    <property type="entry name" value="Peripla_BP_I"/>
</dbReference>
<dbReference type="InterPro" id="IPR000524">
    <property type="entry name" value="Tscrpt_reg_HTH_GntR"/>
</dbReference>
<dbReference type="InterPro" id="IPR036388">
    <property type="entry name" value="WH-like_DNA-bd_sf"/>
</dbReference>
<dbReference type="InterPro" id="IPR036390">
    <property type="entry name" value="WH_DNA-bd_sf"/>
</dbReference>
<dbReference type="PANTHER" id="PTHR30146:SF150">
    <property type="entry name" value="ARABINOSE METABOLISM TRANSCRIPTIONAL REPRESSOR"/>
    <property type="match status" value="1"/>
</dbReference>
<dbReference type="PANTHER" id="PTHR30146">
    <property type="entry name" value="LACI-RELATED TRANSCRIPTIONAL REPRESSOR"/>
    <property type="match status" value="1"/>
</dbReference>
<dbReference type="Pfam" id="PF00392">
    <property type="entry name" value="GntR"/>
    <property type="match status" value="1"/>
</dbReference>
<dbReference type="Pfam" id="PF13377">
    <property type="entry name" value="Peripla_BP_3"/>
    <property type="match status" value="1"/>
</dbReference>
<dbReference type="PRINTS" id="PR00035">
    <property type="entry name" value="HTHGNTR"/>
</dbReference>
<dbReference type="SMART" id="SM00345">
    <property type="entry name" value="HTH_GNTR"/>
    <property type="match status" value="1"/>
</dbReference>
<dbReference type="SUPFAM" id="SSF53822">
    <property type="entry name" value="Periplasmic binding protein-like I"/>
    <property type="match status" value="1"/>
</dbReference>
<dbReference type="SUPFAM" id="SSF46785">
    <property type="entry name" value="Winged helix' DNA-binding domain"/>
    <property type="match status" value="1"/>
</dbReference>
<dbReference type="PROSITE" id="PS50949">
    <property type="entry name" value="HTH_GNTR"/>
    <property type="match status" value="1"/>
</dbReference>
<proteinExistence type="inferred from homology"/>
<organism>
    <name type="scientific">Geobacillus stearothermophilus</name>
    <name type="common">Bacillus stearothermophilus</name>
    <dbReference type="NCBI Taxonomy" id="1422"/>
    <lineage>
        <taxon>Bacteria</taxon>
        <taxon>Bacillati</taxon>
        <taxon>Bacillota</taxon>
        <taxon>Bacilli</taxon>
        <taxon>Bacillales</taxon>
        <taxon>Anoxybacillaceae</taxon>
        <taxon>Geobacillus</taxon>
    </lineage>
</organism>
<keyword id="KW-0963">Cytoplasm</keyword>
<keyword id="KW-0238">DNA-binding</keyword>
<keyword id="KW-0678">Repressor</keyword>
<keyword id="KW-0804">Transcription</keyword>
<keyword id="KW-0805">Transcription regulation</keyword>
<protein>
    <recommendedName>
        <fullName>Arabinose metabolism transcriptional repressor</fullName>
    </recommendedName>
</protein>
<reference key="1">
    <citation type="submission" date="1999-06" db="EMBL/GenBank/DDBJ databases">
        <title>The L-arabinose utilization gene cluster from Bacillus stearothermophilus T-6.</title>
        <authorList>
            <person name="Gilead-Gropper S."/>
            <person name="Shoham Y."/>
        </authorList>
    </citation>
    <scope>NUCLEOTIDE SEQUENCE [GENOMIC DNA]</scope>
    <source>
        <strain>T-6 / NCIMB 40222</strain>
    </source>
</reference>
<accession>Q9S470</accession>
<name>ARAR_GEOSE</name>
<gene>
    <name type="primary">araR</name>
</gene>
<comment type="function">
    <text evidence="1">Transcriptional repressor of the arabinose utilization genes.</text>
</comment>
<comment type="subcellular location">
    <subcellularLocation>
        <location evidence="3">Cytoplasm</location>
    </subcellularLocation>
</comment>
<feature type="chain" id="PRO_0000050619" description="Arabinose metabolism transcriptional repressor">
    <location>
        <begin position="1"/>
        <end position="364"/>
    </location>
</feature>
<feature type="domain" description="HTH gntR-type" evidence="2">
    <location>
        <begin position="6"/>
        <end position="74"/>
    </location>
</feature>
<feature type="DNA-binding region" description="H-T-H motif" evidence="2">
    <location>
        <begin position="34"/>
        <end position="53"/>
    </location>
</feature>
<evidence type="ECO:0000250" key="1"/>
<evidence type="ECO:0000255" key="2">
    <source>
        <dbReference type="PROSITE-ProRule" id="PRU00307"/>
    </source>
</evidence>
<evidence type="ECO:0000305" key="3"/>
<sequence>MKEKTLPKYLQLKQEILSWIISGQMKPDEKIPTEHEIANQFQLSRHTVRQALGELEKEGWLYKIQGSGTFVSRPKPKEQVDTKTIGIVTTYISDYIFPHIVRGAEETLREKGYRLLLASTNNDKQREKEQLEEMIREPLSGLIIEPTKSAQGNPNMGYYLSLNNLHIPYVMINARYLEVSCPCVKMDDEQGGFLLTDHLIRLGHRRIAGFFKTDDLQGVDRLRGFIRAHQQHEVPVATEYLLSYATEEKWTKPLEVAREFLQRPKEERPTAFVCYNDELAILLLEVIRQQGLSVPDDISIVGFDDFTFATATEVKLTTIRHPKTEMGVQAAEMLIQMIEQRSVDKIGDIIYRPELIVRNSTKEI</sequence>